<name>BTUD_VIBC1</name>
<dbReference type="EC" id="7.6.2.8" evidence="1"/>
<dbReference type="EMBL" id="CP000789">
    <property type="protein sequence ID" value="ABU71098.1"/>
    <property type="molecule type" value="Genomic_DNA"/>
</dbReference>
<dbReference type="RefSeq" id="WP_012127855.1">
    <property type="nucleotide sequence ID" value="NC_009783.1"/>
</dbReference>
<dbReference type="SMR" id="A7MVV6"/>
<dbReference type="KEGG" id="vha:VIBHAR_02133"/>
<dbReference type="PATRIC" id="fig|338187.25.peg.559"/>
<dbReference type="Proteomes" id="UP000008152">
    <property type="component" value="Chromosome I"/>
</dbReference>
<dbReference type="GO" id="GO:0005886">
    <property type="term" value="C:plasma membrane"/>
    <property type="evidence" value="ECO:0007669"/>
    <property type="project" value="UniProtKB-SubCell"/>
</dbReference>
<dbReference type="GO" id="GO:0015420">
    <property type="term" value="F:ABC-type vitamin B12 transporter activity"/>
    <property type="evidence" value="ECO:0007669"/>
    <property type="project" value="UniProtKB-UniRule"/>
</dbReference>
<dbReference type="GO" id="GO:0005524">
    <property type="term" value="F:ATP binding"/>
    <property type="evidence" value="ECO:0007669"/>
    <property type="project" value="UniProtKB-KW"/>
</dbReference>
<dbReference type="GO" id="GO:0016887">
    <property type="term" value="F:ATP hydrolysis activity"/>
    <property type="evidence" value="ECO:0007669"/>
    <property type="project" value="InterPro"/>
</dbReference>
<dbReference type="FunFam" id="3.40.50.300:FF:000462">
    <property type="entry name" value="Vitamin B12 import ATP-binding protein BtuD"/>
    <property type="match status" value="1"/>
</dbReference>
<dbReference type="Gene3D" id="3.40.50.300">
    <property type="entry name" value="P-loop containing nucleotide triphosphate hydrolases"/>
    <property type="match status" value="1"/>
</dbReference>
<dbReference type="HAMAP" id="MF_01005">
    <property type="entry name" value="BtuD"/>
    <property type="match status" value="1"/>
</dbReference>
<dbReference type="InterPro" id="IPR003593">
    <property type="entry name" value="AAA+_ATPase"/>
</dbReference>
<dbReference type="InterPro" id="IPR003439">
    <property type="entry name" value="ABC_transporter-like_ATP-bd"/>
</dbReference>
<dbReference type="InterPro" id="IPR023693">
    <property type="entry name" value="ABC_transptr_BtuD"/>
</dbReference>
<dbReference type="InterPro" id="IPR050153">
    <property type="entry name" value="Metal_Ion_Import_ABC"/>
</dbReference>
<dbReference type="InterPro" id="IPR027417">
    <property type="entry name" value="P-loop_NTPase"/>
</dbReference>
<dbReference type="NCBIfam" id="NF002981">
    <property type="entry name" value="PRK03695.1"/>
    <property type="match status" value="1"/>
</dbReference>
<dbReference type="PANTHER" id="PTHR42734">
    <property type="entry name" value="METAL TRANSPORT SYSTEM ATP-BINDING PROTEIN TM_0124-RELATED"/>
    <property type="match status" value="1"/>
</dbReference>
<dbReference type="PANTHER" id="PTHR42734:SF18">
    <property type="entry name" value="VITAMIN B12 IMPORT ATP-BINDING PROTEIN BTUD"/>
    <property type="match status" value="1"/>
</dbReference>
<dbReference type="Pfam" id="PF00005">
    <property type="entry name" value="ABC_tran"/>
    <property type="match status" value="1"/>
</dbReference>
<dbReference type="SMART" id="SM00382">
    <property type="entry name" value="AAA"/>
    <property type="match status" value="1"/>
</dbReference>
<dbReference type="SUPFAM" id="SSF52540">
    <property type="entry name" value="P-loop containing nucleoside triphosphate hydrolases"/>
    <property type="match status" value="1"/>
</dbReference>
<dbReference type="PROSITE" id="PS50893">
    <property type="entry name" value="ABC_TRANSPORTER_2"/>
    <property type="match status" value="1"/>
</dbReference>
<gene>
    <name evidence="1" type="primary">btuD</name>
    <name type="ordered locus">VIBHAR_02133</name>
</gene>
<feature type="chain" id="PRO_1000083970" description="Vitamin B12 import ATP-binding protein BtuD">
    <location>
        <begin position="1"/>
        <end position="255"/>
    </location>
</feature>
<feature type="domain" description="ABC transporter" evidence="1">
    <location>
        <begin position="2"/>
        <end position="240"/>
    </location>
</feature>
<feature type="binding site" evidence="1">
    <location>
        <begin position="30"/>
        <end position="37"/>
    </location>
    <ligand>
        <name>ATP</name>
        <dbReference type="ChEBI" id="CHEBI:30616"/>
    </ligand>
</feature>
<proteinExistence type="inferred from homology"/>
<sequence>MMHVKHIALGSRLLPLSFACNPSEVVHVVGPNGSGKSTLLGAISGTLTQREGVSGQVLVDSNDLLTMPLSEQAHIRGYLCQQSRPTFNVDVFQYLALSLPTGANISDAKVRDAVNIVIELVQLQDKLHRSIQTLSGGEWQRVRLAGVCLQVWRTINPYSQLLILDEPAAPLDIAQEGLLYQLINAVAAQGIGVLVANHDLNRTLRYADKVLLLNNGVLHSLGHADEVLTEEGLAEVFQTQVRKVVLEDRPYLIFD</sequence>
<organism>
    <name type="scientific">Vibrio campbellii (strain ATCC BAA-1116)</name>
    <dbReference type="NCBI Taxonomy" id="2902295"/>
    <lineage>
        <taxon>Bacteria</taxon>
        <taxon>Pseudomonadati</taxon>
        <taxon>Pseudomonadota</taxon>
        <taxon>Gammaproteobacteria</taxon>
        <taxon>Vibrionales</taxon>
        <taxon>Vibrionaceae</taxon>
        <taxon>Vibrio</taxon>
    </lineage>
</organism>
<reference key="1">
    <citation type="submission" date="2007-08" db="EMBL/GenBank/DDBJ databases">
        <authorList>
            <consortium name="The Vibrio harveyi Genome Sequencing Project"/>
            <person name="Bassler B."/>
            <person name="Clifton S.W."/>
            <person name="Fulton L."/>
            <person name="Delehaunty K."/>
            <person name="Fronick C."/>
            <person name="Harrison M."/>
            <person name="Markivic C."/>
            <person name="Fulton R."/>
            <person name="Tin-Wollam A.-M."/>
            <person name="Shah N."/>
            <person name="Pepin K."/>
            <person name="Nash W."/>
            <person name="Thiruvilangam P."/>
            <person name="Bhonagiri V."/>
            <person name="Waters C."/>
            <person name="Tu K.C."/>
            <person name="Irgon J."/>
            <person name="Wilson R.K."/>
        </authorList>
    </citation>
    <scope>NUCLEOTIDE SEQUENCE [LARGE SCALE GENOMIC DNA]</scope>
    <source>
        <strain>ATCC BAA-1116 / BB120</strain>
    </source>
</reference>
<accession>A7MVV6</accession>
<evidence type="ECO:0000255" key="1">
    <source>
        <dbReference type="HAMAP-Rule" id="MF_01005"/>
    </source>
</evidence>
<protein>
    <recommendedName>
        <fullName evidence="1">Vitamin B12 import ATP-binding protein BtuD</fullName>
        <ecNumber evidence="1">7.6.2.8</ecNumber>
    </recommendedName>
    <alternativeName>
        <fullName evidence="1">Vitamin B12-transporting ATPase</fullName>
    </alternativeName>
</protein>
<keyword id="KW-0067">ATP-binding</keyword>
<keyword id="KW-0997">Cell inner membrane</keyword>
<keyword id="KW-1003">Cell membrane</keyword>
<keyword id="KW-0472">Membrane</keyword>
<keyword id="KW-0547">Nucleotide-binding</keyword>
<keyword id="KW-1278">Translocase</keyword>
<keyword id="KW-0813">Transport</keyword>
<comment type="function">
    <text evidence="1">Part of the ABC transporter complex BtuCDF involved in vitamin B12 import. Responsible for energy coupling to the transport system.</text>
</comment>
<comment type="catalytic activity">
    <reaction evidence="1">
        <text>an R-cob(III)alamin(out) + ATP + H2O = an R-cob(III)alamin(in) + ADP + phosphate + H(+)</text>
        <dbReference type="Rhea" id="RHEA:17873"/>
        <dbReference type="ChEBI" id="CHEBI:15377"/>
        <dbReference type="ChEBI" id="CHEBI:15378"/>
        <dbReference type="ChEBI" id="CHEBI:30616"/>
        <dbReference type="ChEBI" id="CHEBI:43474"/>
        <dbReference type="ChEBI" id="CHEBI:140785"/>
        <dbReference type="ChEBI" id="CHEBI:456216"/>
        <dbReference type="EC" id="7.6.2.8"/>
    </reaction>
</comment>
<comment type="subunit">
    <text evidence="1">The complex is composed of two ATP-binding proteins (BtuD), two transmembrane proteins (BtuC) and a solute-binding protein (BtuF).</text>
</comment>
<comment type="subcellular location">
    <subcellularLocation>
        <location evidence="1">Cell inner membrane</location>
        <topology evidence="1">Peripheral membrane protein</topology>
    </subcellularLocation>
</comment>
<comment type="similarity">
    <text evidence="1">Belongs to the ABC transporter superfamily. Vitamin B12 importer (TC 3.A.1.13.1) family.</text>
</comment>